<accession>Q6F175</accession>
<feature type="chain" id="PRO_0000098414" description="Isoleucine--tRNA ligase">
    <location>
        <begin position="1"/>
        <end position="908"/>
    </location>
</feature>
<feature type="short sequence motif" description="'HIGH' region">
    <location>
        <begin position="59"/>
        <end position="69"/>
    </location>
</feature>
<feature type="short sequence motif" description="'KMSKS' region">
    <location>
        <begin position="595"/>
        <end position="599"/>
    </location>
</feature>
<feature type="binding site" evidence="1">
    <location>
        <position position="554"/>
    </location>
    <ligand>
        <name>L-isoleucyl-5'-AMP</name>
        <dbReference type="ChEBI" id="CHEBI:178002"/>
    </ligand>
</feature>
<feature type="binding site" evidence="1">
    <location>
        <position position="598"/>
    </location>
    <ligand>
        <name>ATP</name>
        <dbReference type="ChEBI" id="CHEBI:30616"/>
    </ligand>
</feature>
<feature type="binding site" evidence="1">
    <location>
        <position position="882"/>
    </location>
    <ligand>
        <name>Zn(2+)</name>
        <dbReference type="ChEBI" id="CHEBI:29105"/>
    </ligand>
</feature>
<feature type="binding site" evidence="1">
    <location>
        <position position="885"/>
    </location>
    <ligand>
        <name>Zn(2+)</name>
        <dbReference type="ChEBI" id="CHEBI:29105"/>
    </ligand>
</feature>
<feature type="binding site" evidence="1">
    <location>
        <position position="898"/>
    </location>
    <ligand>
        <name>Zn(2+)</name>
        <dbReference type="ChEBI" id="CHEBI:29105"/>
    </ligand>
</feature>
<feature type="binding site" evidence="1">
    <location>
        <position position="901"/>
    </location>
    <ligand>
        <name>Zn(2+)</name>
        <dbReference type="ChEBI" id="CHEBI:29105"/>
    </ligand>
</feature>
<keyword id="KW-0030">Aminoacyl-tRNA synthetase</keyword>
<keyword id="KW-0067">ATP-binding</keyword>
<keyword id="KW-0963">Cytoplasm</keyword>
<keyword id="KW-0436">Ligase</keyword>
<keyword id="KW-0479">Metal-binding</keyword>
<keyword id="KW-0547">Nucleotide-binding</keyword>
<keyword id="KW-0648">Protein biosynthesis</keyword>
<keyword id="KW-1185">Reference proteome</keyword>
<keyword id="KW-0862">Zinc</keyword>
<protein>
    <recommendedName>
        <fullName evidence="1">Isoleucine--tRNA ligase</fullName>
        <ecNumber evidence="1">6.1.1.5</ecNumber>
    </recommendedName>
    <alternativeName>
        <fullName evidence="1">Isoleucyl-tRNA synthetase</fullName>
        <shortName evidence="1">IleRS</shortName>
    </alternativeName>
</protein>
<sequence>MKNIYKDTLLIGQTDFDMRAGLKDKEPVIQEMWDAKKIYDQKQKLNEGKPLFMLHDGPPYANGDLHIGHALNKTLKDMIIRWKNANGYLAPFIMGWDTHGLPIETAVTKMGIDRKQTPAVEFRDMCKDYALKQVANQANQFKRLGIFSNSDVKYVTLTHDFEVSELRLFQKMYEKEMVYKALKPIYWSPSSESALAESEIEYKDVKSPTIFVAMKVVEGNAKIDTDTEIVIWTTTPWTIPSNQMAAVGENIEYNIVKANDRKFILASSLVNKVAEQIGWETFEILDTLKGPEIVGVKYAHPLYEQKINPVVIGHHVTDEAGTGIVHTAGGFGEDDYIIVKQHGIEPFAPIDDQGKFTNEIAEFDEKLVGVFYEDANKIVGMDLEAKQRLLKLKFVSHSYPHDWRTKKPVIYRCTSQWFIGLDKAKNQILANVDQITTKPEWAKKRLYQVLEDRTDWTISRQRLWGVPIVAFYDQNDKLVLNNEILAFAIDKIAELGTNAWFDKPADTFLPEAYRNKNLKKEKDILDVWFDSGSSAIALSERFKNLPLPYDLYLEGNDQYRGWFNASMINSTIYSGKSPYKKLISHGMTVDEKGNKMSKSLGNGIDPIEFANTQGADILRLWVASTDYTDDQKIGPEIIKQIGESYRKIRNTMRFILANLFDFDPSKDYQTNLTEVDRYALNNLSVVKNKASEAYDNLSYNQVYNLVVNYVTKDLSSFYLDFIKDILYIEKNDSIRRRQVQTVLYEQLWMLIDLLRPILIHTIEEVYQAMVNLNKTDSVHLLDNKKQDFIESNEFVTKWNNIMVLRDDVNKALEIAREQKIINKGFEATVKVCLKDEFKNIESTTELEKIFIVNSLSFTNDCSGLSEQKIAFVGVELKNGTKCERCWGIFDTLINNEICERCNSVVESL</sequence>
<gene>
    <name evidence="1" type="primary">ileS</name>
    <name type="ordered locus">Mfl389</name>
</gene>
<comment type="function">
    <text evidence="1">Catalyzes the attachment of isoleucine to tRNA(Ile). As IleRS can inadvertently accommodate and process structurally similar amino acids such as valine, to avoid such errors it has two additional distinct tRNA(Ile)-dependent editing activities. One activity is designated as 'pretransfer' editing and involves the hydrolysis of activated Val-AMP. The other activity is designated 'posttransfer' editing and involves deacylation of mischarged Val-tRNA(Ile).</text>
</comment>
<comment type="catalytic activity">
    <reaction evidence="1">
        <text>tRNA(Ile) + L-isoleucine + ATP = L-isoleucyl-tRNA(Ile) + AMP + diphosphate</text>
        <dbReference type="Rhea" id="RHEA:11060"/>
        <dbReference type="Rhea" id="RHEA-COMP:9666"/>
        <dbReference type="Rhea" id="RHEA-COMP:9695"/>
        <dbReference type="ChEBI" id="CHEBI:30616"/>
        <dbReference type="ChEBI" id="CHEBI:33019"/>
        <dbReference type="ChEBI" id="CHEBI:58045"/>
        <dbReference type="ChEBI" id="CHEBI:78442"/>
        <dbReference type="ChEBI" id="CHEBI:78528"/>
        <dbReference type="ChEBI" id="CHEBI:456215"/>
        <dbReference type="EC" id="6.1.1.5"/>
    </reaction>
</comment>
<comment type="cofactor">
    <cofactor evidence="1">
        <name>Zn(2+)</name>
        <dbReference type="ChEBI" id="CHEBI:29105"/>
    </cofactor>
    <text evidence="1">Binds 1 zinc ion per subunit.</text>
</comment>
<comment type="subunit">
    <text evidence="1">Monomer.</text>
</comment>
<comment type="subcellular location">
    <subcellularLocation>
        <location evidence="1">Cytoplasm</location>
    </subcellularLocation>
</comment>
<comment type="domain">
    <text evidence="1">IleRS has two distinct active sites: one for aminoacylation and one for editing. The misactivated valine is translocated from the active site to the editing site, which sterically excludes the correctly activated isoleucine. The single editing site contains two valyl binding pockets, one specific for each substrate (Val-AMP or Val-tRNA(Ile)).</text>
</comment>
<comment type="similarity">
    <text evidence="1">Belongs to the class-I aminoacyl-tRNA synthetase family. IleS type 1 subfamily.</text>
</comment>
<reference key="1">
    <citation type="submission" date="2004-06" db="EMBL/GenBank/DDBJ databases">
        <authorList>
            <person name="Birren B.W."/>
            <person name="Stange-Thomann N."/>
            <person name="Hafez N."/>
            <person name="DeCaprio D."/>
            <person name="Fisher S."/>
            <person name="Butler J."/>
            <person name="Elkins T."/>
            <person name="Kodira C.D."/>
            <person name="Major J."/>
            <person name="Wang S."/>
            <person name="Nicol R."/>
            <person name="Nusbaum C."/>
        </authorList>
    </citation>
    <scope>NUCLEOTIDE SEQUENCE [LARGE SCALE GENOMIC DNA]</scope>
    <source>
        <strain>ATCC 33453 / NBRC 100688 / NCTC 11704 / L1</strain>
    </source>
</reference>
<name>SYI_MESFL</name>
<organism>
    <name type="scientific">Mesoplasma florum (strain ATCC 33453 / NBRC 100688 / NCTC 11704 / L1)</name>
    <name type="common">Acholeplasma florum</name>
    <dbReference type="NCBI Taxonomy" id="265311"/>
    <lineage>
        <taxon>Bacteria</taxon>
        <taxon>Bacillati</taxon>
        <taxon>Mycoplasmatota</taxon>
        <taxon>Mollicutes</taxon>
        <taxon>Entomoplasmatales</taxon>
        <taxon>Entomoplasmataceae</taxon>
        <taxon>Mesoplasma</taxon>
    </lineage>
</organism>
<proteinExistence type="inferred from homology"/>
<evidence type="ECO:0000255" key="1">
    <source>
        <dbReference type="HAMAP-Rule" id="MF_02002"/>
    </source>
</evidence>
<dbReference type="EC" id="6.1.1.5" evidence="1"/>
<dbReference type="EMBL" id="AE017263">
    <property type="protein sequence ID" value="AAT75748.1"/>
    <property type="molecule type" value="Genomic_DNA"/>
</dbReference>
<dbReference type="RefSeq" id="WP_011183288.1">
    <property type="nucleotide sequence ID" value="NC_006055.1"/>
</dbReference>
<dbReference type="RefSeq" id="YP_053632.1">
    <property type="nucleotide sequence ID" value="NC_006055.1"/>
</dbReference>
<dbReference type="SMR" id="Q6F175"/>
<dbReference type="STRING" id="265311.Mfl389"/>
<dbReference type="PaxDb" id="265311-Mfl389"/>
<dbReference type="EnsemblBacteria" id="AAT75748">
    <property type="protein sequence ID" value="AAT75748"/>
    <property type="gene ID" value="Mfl389"/>
</dbReference>
<dbReference type="GeneID" id="2898000"/>
<dbReference type="KEGG" id="mfl:Mfl389"/>
<dbReference type="PATRIC" id="fig|265311.5.peg.389"/>
<dbReference type="eggNOG" id="COG0060">
    <property type="taxonomic scope" value="Bacteria"/>
</dbReference>
<dbReference type="HOGENOM" id="CLU_001493_7_1_14"/>
<dbReference type="OrthoDB" id="9810365at2"/>
<dbReference type="Proteomes" id="UP000006647">
    <property type="component" value="Chromosome"/>
</dbReference>
<dbReference type="GO" id="GO:0005829">
    <property type="term" value="C:cytosol"/>
    <property type="evidence" value="ECO:0007669"/>
    <property type="project" value="TreeGrafter"/>
</dbReference>
<dbReference type="GO" id="GO:0002161">
    <property type="term" value="F:aminoacyl-tRNA deacylase activity"/>
    <property type="evidence" value="ECO:0007669"/>
    <property type="project" value="InterPro"/>
</dbReference>
<dbReference type="GO" id="GO:0005524">
    <property type="term" value="F:ATP binding"/>
    <property type="evidence" value="ECO:0007669"/>
    <property type="project" value="UniProtKB-UniRule"/>
</dbReference>
<dbReference type="GO" id="GO:0004822">
    <property type="term" value="F:isoleucine-tRNA ligase activity"/>
    <property type="evidence" value="ECO:0007669"/>
    <property type="project" value="UniProtKB-UniRule"/>
</dbReference>
<dbReference type="GO" id="GO:0000049">
    <property type="term" value="F:tRNA binding"/>
    <property type="evidence" value="ECO:0007669"/>
    <property type="project" value="InterPro"/>
</dbReference>
<dbReference type="GO" id="GO:0008270">
    <property type="term" value="F:zinc ion binding"/>
    <property type="evidence" value="ECO:0007669"/>
    <property type="project" value="UniProtKB-UniRule"/>
</dbReference>
<dbReference type="GO" id="GO:0006428">
    <property type="term" value="P:isoleucyl-tRNA aminoacylation"/>
    <property type="evidence" value="ECO:0007669"/>
    <property type="project" value="UniProtKB-UniRule"/>
</dbReference>
<dbReference type="CDD" id="cd07960">
    <property type="entry name" value="Anticodon_Ia_Ile_BEm"/>
    <property type="match status" value="1"/>
</dbReference>
<dbReference type="FunFam" id="3.40.50.620:FF:000152">
    <property type="entry name" value="Isoleucine--tRNA ligase"/>
    <property type="match status" value="1"/>
</dbReference>
<dbReference type="Gene3D" id="1.10.730.20">
    <property type="match status" value="1"/>
</dbReference>
<dbReference type="Gene3D" id="3.40.50.620">
    <property type="entry name" value="HUPs"/>
    <property type="match status" value="2"/>
</dbReference>
<dbReference type="Gene3D" id="1.10.10.830">
    <property type="entry name" value="Ile-tRNA synthetase CP2 domain-like"/>
    <property type="match status" value="1"/>
</dbReference>
<dbReference type="HAMAP" id="MF_02002">
    <property type="entry name" value="Ile_tRNA_synth_type1"/>
    <property type="match status" value="1"/>
</dbReference>
<dbReference type="InterPro" id="IPR001412">
    <property type="entry name" value="aa-tRNA-synth_I_CS"/>
</dbReference>
<dbReference type="InterPro" id="IPR002300">
    <property type="entry name" value="aa-tRNA-synth_Ia"/>
</dbReference>
<dbReference type="InterPro" id="IPR033708">
    <property type="entry name" value="Anticodon_Ile_BEm"/>
</dbReference>
<dbReference type="InterPro" id="IPR002301">
    <property type="entry name" value="Ile-tRNA-ligase"/>
</dbReference>
<dbReference type="InterPro" id="IPR023585">
    <property type="entry name" value="Ile-tRNA-ligase_type1"/>
</dbReference>
<dbReference type="InterPro" id="IPR050081">
    <property type="entry name" value="Ile-tRNA_ligase"/>
</dbReference>
<dbReference type="InterPro" id="IPR013155">
    <property type="entry name" value="M/V/L/I-tRNA-synth_anticd-bd"/>
</dbReference>
<dbReference type="InterPro" id="IPR014729">
    <property type="entry name" value="Rossmann-like_a/b/a_fold"/>
</dbReference>
<dbReference type="InterPro" id="IPR009080">
    <property type="entry name" value="tRNAsynth_Ia_anticodon-bd"/>
</dbReference>
<dbReference type="InterPro" id="IPR009008">
    <property type="entry name" value="Val/Leu/Ile-tRNA-synth_edit"/>
</dbReference>
<dbReference type="NCBIfam" id="TIGR00392">
    <property type="entry name" value="ileS"/>
    <property type="match status" value="1"/>
</dbReference>
<dbReference type="PANTHER" id="PTHR42765:SF1">
    <property type="entry name" value="ISOLEUCINE--TRNA LIGASE, MITOCHONDRIAL"/>
    <property type="match status" value="1"/>
</dbReference>
<dbReference type="PANTHER" id="PTHR42765">
    <property type="entry name" value="SOLEUCYL-TRNA SYNTHETASE"/>
    <property type="match status" value="1"/>
</dbReference>
<dbReference type="Pfam" id="PF08264">
    <property type="entry name" value="Anticodon_1"/>
    <property type="match status" value="1"/>
</dbReference>
<dbReference type="Pfam" id="PF00133">
    <property type="entry name" value="tRNA-synt_1"/>
    <property type="match status" value="1"/>
</dbReference>
<dbReference type="PRINTS" id="PR00984">
    <property type="entry name" value="TRNASYNTHILE"/>
</dbReference>
<dbReference type="SUPFAM" id="SSF47323">
    <property type="entry name" value="Anticodon-binding domain of a subclass of class I aminoacyl-tRNA synthetases"/>
    <property type="match status" value="1"/>
</dbReference>
<dbReference type="SUPFAM" id="SSF52374">
    <property type="entry name" value="Nucleotidylyl transferase"/>
    <property type="match status" value="1"/>
</dbReference>
<dbReference type="SUPFAM" id="SSF50677">
    <property type="entry name" value="ValRS/IleRS/LeuRS editing domain"/>
    <property type="match status" value="1"/>
</dbReference>
<dbReference type="PROSITE" id="PS00178">
    <property type="entry name" value="AA_TRNA_LIGASE_I"/>
    <property type="match status" value="1"/>
</dbReference>